<accession>B7MXX0</accession>
<comment type="function">
    <text evidence="1">Catalyzes the strictly specific dephosphorylation of 2'-deoxyribonucleoside 5'-monophosphates.</text>
</comment>
<comment type="catalytic activity">
    <reaction evidence="1">
        <text>a 2'-deoxyribonucleoside 5'-phosphate + H2O = a 2'-deoxyribonucleoside + phosphate</text>
        <dbReference type="Rhea" id="RHEA:36167"/>
        <dbReference type="ChEBI" id="CHEBI:15377"/>
        <dbReference type="ChEBI" id="CHEBI:18274"/>
        <dbReference type="ChEBI" id="CHEBI:43474"/>
        <dbReference type="ChEBI" id="CHEBI:65317"/>
        <dbReference type="EC" id="3.1.3.89"/>
    </reaction>
</comment>
<comment type="cofactor">
    <cofactor evidence="1">
        <name>a divalent metal cation</name>
        <dbReference type="ChEBI" id="CHEBI:60240"/>
    </cofactor>
</comment>
<comment type="subunit">
    <text evidence="1">Homodimer.</text>
</comment>
<comment type="subcellular location">
    <subcellularLocation>
        <location evidence="1">Cytoplasm</location>
    </subcellularLocation>
</comment>
<comment type="similarity">
    <text evidence="1">Belongs to the 5DNU family.</text>
</comment>
<protein>
    <recommendedName>
        <fullName evidence="1">5'-deoxynucleotidase YfbR</fullName>
        <ecNumber evidence="1">3.1.3.89</ecNumber>
    </recommendedName>
    <alternativeName>
        <fullName evidence="1">5'-deoxyribonucleotidase</fullName>
    </alternativeName>
    <alternativeName>
        <fullName evidence="1">Nucleoside 5'-monophosphate phosphohydrolase</fullName>
    </alternativeName>
</protein>
<dbReference type="EC" id="3.1.3.89" evidence="1"/>
<dbReference type="EMBL" id="CU928162">
    <property type="protein sequence ID" value="CAR08936.2"/>
    <property type="molecule type" value="Genomic_DNA"/>
</dbReference>
<dbReference type="RefSeq" id="WP_000813854.1">
    <property type="nucleotide sequence ID" value="NC_011745.1"/>
</dbReference>
<dbReference type="SMR" id="B7MXX0"/>
<dbReference type="KEGG" id="ecq:ECED1_2755"/>
<dbReference type="HOGENOM" id="CLU_084784_0_0_6"/>
<dbReference type="Proteomes" id="UP000000748">
    <property type="component" value="Chromosome"/>
</dbReference>
<dbReference type="GO" id="GO:0005737">
    <property type="term" value="C:cytoplasm"/>
    <property type="evidence" value="ECO:0007669"/>
    <property type="project" value="UniProtKB-SubCell"/>
</dbReference>
<dbReference type="GO" id="GO:0002953">
    <property type="term" value="F:5'-deoxynucleotidase activity"/>
    <property type="evidence" value="ECO:0007669"/>
    <property type="project" value="UniProtKB-EC"/>
</dbReference>
<dbReference type="GO" id="GO:0046872">
    <property type="term" value="F:metal ion binding"/>
    <property type="evidence" value="ECO:0007669"/>
    <property type="project" value="UniProtKB-KW"/>
</dbReference>
<dbReference type="GO" id="GO:0000166">
    <property type="term" value="F:nucleotide binding"/>
    <property type="evidence" value="ECO:0007669"/>
    <property type="project" value="UniProtKB-KW"/>
</dbReference>
<dbReference type="CDD" id="cd00077">
    <property type="entry name" value="HDc"/>
    <property type="match status" value="1"/>
</dbReference>
<dbReference type="FunFam" id="1.10.3210.10:FF:000002">
    <property type="entry name" value="Nucleotidase YfbR"/>
    <property type="match status" value="1"/>
</dbReference>
<dbReference type="Gene3D" id="1.10.3210.10">
    <property type="entry name" value="Hypothetical protein af1432"/>
    <property type="match status" value="1"/>
</dbReference>
<dbReference type="HAMAP" id="MF_01100">
    <property type="entry name" value="5DNU"/>
    <property type="match status" value="1"/>
</dbReference>
<dbReference type="InterPro" id="IPR003607">
    <property type="entry name" value="HD/PDEase_dom"/>
</dbReference>
<dbReference type="InterPro" id="IPR006674">
    <property type="entry name" value="HD_domain"/>
</dbReference>
<dbReference type="InterPro" id="IPR022971">
    <property type="entry name" value="YfbR"/>
</dbReference>
<dbReference type="InterPro" id="IPR039356">
    <property type="entry name" value="YfbR/HDDC2"/>
</dbReference>
<dbReference type="NCBIfam" id="NF003009">
    <property type="entry name" value="PRK03826.1"/>
    <property type="match status" value="1"/>
</dbReference>
<dbReference type="PANTHER" id="PTHR11845">
    <property type="entry name" value="5'-DEOXYNUCLEOTIDASE HDDC2"/>
    <property type="match status" value="1"/>
</dbReference>
<dbReference type="PANTHER" id="PTHR11845:SF13">
    <property type="entry name" value="5'-DEOXYNUCLEOTIDASE HDDC2"/>
    <property type="match status" value="1"/>
</dbReference>
<dbReference type="Pfam" id="PF12917">
    <property type="entry name" value="YfbR-like"/>
    <property type="match status" value="1"/>
</dbReference>
<dbReference type="SMART" id="SM00471">
    <property type="entry name" value="HDc"/>
    <property type="match status" value="1"/>
</dbReference>
<dbReference type="SUPFAM" id="SSF109604">
    <property type="entry name" value="HD-domain/PDEase-like"/>
    <property type="match status" value="1"/>
</dbReference>
<dbReference type="PROSITE" id="PS51831">
    <property type="entry name" value="HD"/>
    <property type="match status" value="1"/>
</dbReference>
<keyword id="KW-0963">Cytoplasm</keyword>
<keyword id="KW-0378">Hydrolase</keyword>
<keyword id="KW-0479">Metal-binding</keyword>
<keyword id="KW-0547">Nucleotide-binding</keyword>
<feature type="chain" id="PRO_1000149896" description="5'-deoxynucleotidase YfbR">
    <location>
        <begin position="1"/>
        <end position="199"/>
    </location>
</feature>
<feature type="domain" description="HD" evidence="2">
    <location>
        <begin position="30"/>
        <end position="142"/>
    </location>
</feature>
<feature type="binding site" evidence="1">
    <location>
        <begin position="18"/>
        <end position="19"/>
    </location>
    <ligand>
        <name>substrate</name>
    </ligand>
</feature>
<feature type="binding site" evidence="1">
    <location>
        <position position="33"/>
    </location>
    <ligand>
        <name>a divalent metal cation</name>
        <dbReference type="ChEBI" id="CHEBI:60240"/>
    </ligand>
</feature>
<feature type="binding site" evidence="1">
    <location>
        <position position="33"/>
    </location>
    <ligand>
        <name>substrate</name>
    </ligand>
</feature>
<feature type="binding site" evidence="1">
    <location>
        <position position="68"/>
    </location>
    <ligand>
        <name>a divalent metal cation</name>
        <dbReference type="ChEBI" id="CHEBI:60240"/>
    </ligand>
</feature>
<feature type="binding site" evidence="1">
    <location>
        <position position="69"/>
    </location>
    <ligand>
        <name>a divalent metal cation</name>
        <dbReference type="ChEBI" id="CHEBI:60240"/>
    </ligand>
</feature>
<feature type="binding site" evidence="1">
    <location>
        <position position="69"/>
    </location>
    <ligand>
        <name>substrate</name>
    </ligand>
</feature>
<feature type="binding site" evidence="1">
    <location>
        <begin position="77"/>
        <end position="80"/>
    </location>
    <ligand>
        <name>substrate</name>
    </ligand>
</feature>
<feature type="binding site" evidence="1">
    <location>
        <position position="137"/>
    </location>
    <ligand>
        <name>a divalent metal cation</name>
        <dbReference type="ChEBI" id="CHEBI:60240"/>
    </ligand>
</feature>
<feature type="binding site" evidence="1">
    <location>
        <position position="137"/>
    </location>
    <ligand>
        <name>substrate</name>
    </ligand>
</feature>
<feature type="site" description="Appears to be important in orienting the phosphate for catalysis" evidence="1">
    <location>
        <position position="18"/>
    </location>
</feature>
<name>5DNU_ECO81</name>
<evidence type="ECO:0000255" key="1">
    <source>
        <dbReference type="HAMAP-Rule" id="MF_01100"/>
    </source>
</evidence>
<evidence type="ECO:0000255" key="2">
    <source>
        <dbReference type="PROSITE-ProRule" id="PRU01175"/>
    </source>
</evidence>
<sequence length="199" mass="22666">MKQSHFFAHLSRLKLINRWPLMRNVRTENVSEHSLQVAMVAHALAAIKNRKFGGNVNAERIALLAMYHDASEVLTGDLPTPVKYFNSQIAQEYKAIEKIAQQKLVDMVPEELQDIFAPLIDEHAYSDEEKSLVKQADALCAYLKCLEELAAGNNEFLLAKTRLEATLEARRSQEMDYFMEVFVPSFHLSLDEISQDSPL</sequence>
<proteinExistence type="inferred from homology"/>
<reference key="1">
    <citation type="journal article" date="2009" name="PLoS Genet.">
        <title>Organised genome dynamics in the Escherichia coli species results in highly diverse adaptive paths.</title>
        <authorList>
            <person name="Touchon M."/>
            <person name="Hoede C."/>
            <person name="Tenaillon O."/>
            <person name="Barbe V."/>
            <person name="Baeriswyl S."/>
            <person name="Bidet P."/>
            <person name="Bingen E."/>
            <person name="Bonacorsi S."/>
            <person name="Bouchier C."/>
            <person name="Bouvet O."/>
            <person name="Calteau A."/>
            <person name="Chiapello H."/>
            <person name="Clermont O."/>
            <person name="Cruveiller S."/>
            <person name="Danchin A."/>
            <person name="Diard M."/>
            <person name="Dossat C."/>
            <person name="Karoui M.E."/>
            <person name="Frapy E."/>
            <person name="Garry L."/>
            <person name="Ghigo J.M."/>
            <person name="Gilles A.M."/>
            <person name="Johnson J."/>
            <person name="Le Bouguenec C."/>
            <person name="Lescat M."/>
            <person name="Mangenot S."/>
            <person name="Martinez-Jehanne V."/>
            <person name="Matic I."/>
            <person name="Nassif X."/>
            <person name="Oztas S."/>
            <person name="Petit M.A."/>
            <person name="Pichon C."/>
            <person name="Rouy Z."/>
            <person name="Ruf C.S."/>
            <person name="Schneider D."/>
            <person name="Tourret J."/>
            <person name="Vacherie B."/>
            <person name="Vallenet D."/>
            <person name="Medigue C."/>
            <person name="Rocha E.P.C."/>
            <person name="Denamur E."/>
        </authorList>
    </citation>
    <scope>NUCLEOTIDE SEQUENCE [LARGE SCALE GENOMIC DNA]</scope>
    <source>
        <strain>ED1a</strain>
    </source>
</reference>
<organism>
    <name type="scientific">Escherichia coli O81 (strain ED1a)</name>
    <dbReference type="NCBI Taxonomy" id="585397"/>
    <lineage>
        <taxon>Bacteria</taxon>
        <taxon>Pseudomonadati</taxon>
        <taxon>Pseudomonadota</taxon>
        <taxon>Gammaproteobacteria</taxon>
        <taxon>Enterobacterales</taxon>
        <taxon>Enterobacteriaceae</taxon>
        <taxon>Escherichia</taxon>
    </lineage>
</organism>
<gene>
    <name evidence="1" type="primary">yfbR</name>
    <name type="ordered locus">ECED1_2755</name>
</gene>